<dbReference type="EMBL" id="AM295250">
    <property type="protein sequence ID" value="CAL28192.1"/>
    <property type="molecule type" value="Genomic_DNA"/>
</dbReference>
<dbReference type="RefSeq" id="WP_015900532.1">
    <property type="nucleotide sequence ID" value="NC_012121.1"/>
</dbReference>
<dbReference type="SMR" id="B9DNC6"/>
<dbReference type="GeneID" id="93793710"/>
<dbReference type="KEGG" id="sca:SCA_1286"/>
<dbReference type="eggNOG" id="COG0290">
    <property type="taxonomic scope" value="Bacteria"/>
</dbReference>
<dbReference type="HOGENOM" id="CLU_054919_3_2_9"/>
<dbReference type="OrthoDB" id="9806014at2"/>
<dbReference type="BioCyc" id="SCAR396513:SCA_RS06415-MONOMER"/>
<dbReference type="Proteomes" id="UP000000444">
    <property type="component" value="Chromosome"/>
</dbReference>
<dbReference type="GO" id="GO:0005829">
    <property type="term" value="C:cytosol"/>
    <property type="evidence" value="ECO:0007669"/>
    <property type="project" value="TreeGrafter"/>
</dbReference>
<dbReference type="GO" id="GO:0016020">
    <property type="term" value="C:membrane"/>
    <property type="evidence" value="ECO:0007669"/>
    <property type="project" value="TreeGrafter"/>
</dbReference>
<dbReference type="GO" id="GO:0043022">
    <property type="term" value="F:ribosome binding"/>
    <property type="evidence" value="ECO:0007669"/>
    <property type="project" value="TreeGrafter"/>
</dbReference>
<dbReference type="GO" id="GO:0003743">
    <property type="term" value="F:translation initiation factor activity"/>
    <property type="evidence" value="ECO:0007669"/>
    <property type="project" value="UniProtKB-UniRule"/>
</dbReference>
<dbReference type="GO" id="GO:0032790">
    <property type="term" value="P:ribosome disassembly"/>
    <property type="evidence" value="ECO:0007669"/>
    <property type="project" value="TreeGrafter"/>
</dbReference>
<dbReference type="FunFam" id="3.10.20.80:FF:000001">
    <property type="entry name" value="Translation initiation factor IF-3"/>
    <property type="match status" value="1"/>
</dbReference>
<dbReference type="FunFam" id="3.30.110.10:FF:000001">
    <property type="entry name" value="Translation initiation factor IF-3"/>
    <property type="match status" value="1"/>
</dbReference>
<dbReference type="Gene3D" id="3.30.110.10">
    <property type="entry name" value="Translation initiation factor 3 (IF-3), C-terminal domain"/>
    <property type="match status" value="1"/>
</dbReference>
<dbReference type="Gene3D" id="3.10.20.80">
    <property type="entry name" value="Translation initiation factor 3 (IF-3), N-terminal domain"/>
    <property type="match status" value="1"/>
</dbReference>
<dbReference type="HAMAP" id="MF_00080">
    <property type="entry name" value="IF_3"/>
    <property type="match status" value="1"/>
</dbReference>
<dbReference type="InterPro" id="IPR036788">
    <property type="entry name" value="T_IF-3_C_sf"/>
</dbReference>
<dbReference type="InterPro" id="IPR036787">
    <property type="entry name" value="T_IF-3_N_sf"/>
</dbReference>
<dbReference type="InterPro" id="IPR019813">
    <property type="entry name" value="Translation_initiation_fac3_CS"/>
</dbReference>
<dbReference type="InterPro" id="IPR001288">
    <property type="entry name" value="Translation_initiation_fac_3"/>
</dbReference>
<dbReference type="InterPro" id="IPR019815">
    <property type="entry name" value="Translation_initiation_fac_3_C"/>
</dbReference>
<dbReference type="InterPro" id="IPR019814">
    <property type="entry name" value="Translation_initiation_fac_3_N"/>
</dbReference>
<dbReference type="NCBIfam" id="TIGR00168">
    <property type="entry name" value="infC"/>
    <property type="match status" value="1"/>
</dbReference>
<dbReference type="PANTHER" id="PTHR10938">
    <property type="entry name" value="TRANSLATION INITIATION FACTOR IF-3"/>
    <property type="match status" value="1"/>
</dbReference>
<dbReference type="PANTHER" id="PTHR10938:SF0">
    <property type="entry name" value="TRANSLATION INITIATION FACTOR IF-3, MITOCHONDRIAL"/>
    <property type="match status" value="1"/>
</dbReference>
<dbReference type="Pfam" id="PF00707">
    <property type="entry name" value="IF3_C"/>
    <property type="match status" value="1"/>
</dbReference>
<dbReference type="Pfam" id="PF05198">
    <property type="entry name" value="IF3_N"/>
    <property type="match status" value="1"/>
</dbReference>
<dbReference type="SUPFAM" id="SSF55200">
    <property type="entry name" value="Translation initiation factor IF3, C-terminal domain"/>
    <property type="match status" value="1"/>
</dbReference>
<dbReference type="SUPFAM" id="SSF54364">
    <property type="entry name" value="Translation initiation factor IF3, N-terminal domain"/>
    <property type="match status" value="1"/>
</dbReference>
<dbReference type="PROSITE" id="PS00938">
    <property type="entry name" value="IF3"/>
    <property type="match status" value="1"/>
</dbReference>
<sequence>MLTIAKDQTQVNERIRAREIRVIGQDGEQIGVKQKREALEMAERVGLDLVVVAPNAKPPVARIMDYGKYKFEQQKKEKEMKKKQKVINVKEIRLSPTIEEHDFQTKLKNGRKFLNKGDKCKVSIRFRGRAITHKEIGQRVLEKFADECKDIATVEQRPKMEGRQMFIMLAPIAEK</sequence>
<feature type="chain" id="PRO_1000190842" description="Translation initiation factor IF-3">
    <location>
        <begin position="1"/>
        <end position="175"/>
    </location>
</feature>
<reference key="1">
    <citation type="journal article" date="2009" name="Appl. Environ. Microbiol.">
        <title>Genome analysis of the meat starter culture bacterium Staphylococcus carnosus TM300.</title>
        <authorList>
            <person name="Rosenstein R."/>
            <person name="Nerz C."/>
            <person name="Biswas L."/>
            <person name="Resch A."/>
            <person name="Raddatz G."/>
            <person name="Schuster S.C."/>
            <person name="Goetz F."/>
        </authorList>
    </citation>
    <scope>NUCLEOTIDE SEQUENCE [LARGE SCALE GENOMIC DNA]</scope>
    <source>
        <strain>TM300</strain>
    </source>
</reference>
<accession>B9DNC6</accession>
<organism>
    <name type="scientific">Staphylococcus carnosus (strain TM300)</name>
    <dbReference type="NCBI Taxonomy" id="396513"/>
    <lineage>
        <taxon>Bacteria</taxon>
        <taxon>Bacillati</taxon>
        <taxon>Bacillota</taxon>
        <taxon>Bacilli</taxon>
        <taxon>Bacillales</taxon>
        <taxon>Staphylococcaceae</taxon>
        <taxon>Staphylococcus</taxon>
    </lineage>
</organism>
<proteinExistence type="inferred from homology"/>
<gene>
    <name evidence="1" type="primary">infC</name>
    <name type="ordered locus">Sca_1286</name>
</gene>
<name>IF3_STACT</name>
<protein>
    <recommendedName>
        <fullName evidence="1">Translation initiation factor IF-3</fullName>
    </recommendedName>
</protein>
<comment type="function">
    <text evidence="1">IF-3 binds to the 30S ribosomal subunit and shifts the equilibrium between 70S ribosomes and their 50S and 30S subunits in favor of the free subunits, thus enhancing the availability of 30S subunits on which protein synthesis initiation begins.</text>
</comment>
<comment type="subunit">
    <text evidence="1">Monomer.</text>
</comment>
<comment type="subcellular location">
    <subcellularLocation>
        <location evidence="1">Cytoplasm</location>
    </subcellularLocation>
</comment>
<comment type="similarity">
    <text evidence="1">Belongs to the IF-3 family.</text>
</comment>
<evidence type="ECO:0000255" key="1">
    <source>
        <dbReference type="HAMAP-Rule" id="MF_00080"/>
    </source>
</evidence>
<keyword id="KW-0963">Cytoplasm</keyword>
<keyword id="KW-0396">Initiation factor</keyword>
<keyword id="KW-0648">Protein biosynthesis</keyword>
<keyword id="KW-1185">Reference proteome</keyword>